<accession>A2QYD4</accession>
<name>GAL4_ASPNC</name>
<keyword id="KW-0238">DNA-binding</keyword>
<keyword id="KW-0479">Metal-binding</keyword>
<keyword id="KW-0539">Nucleus</keyword>
<keyword id="KW-1185">Reference proteome</keyword>
<keyword id="KW-0804">Transcription</keyword>
<keyword id="KW-0805">Transcription regulation</keyword>
<keyword id="KW-0862">Zinc</keyword>
<sequence length="825" mass="92882">MEDASGSYPFGVATADGTPLQIDAENAAVRGINEWSWGSMSPGIPPAAFRPYSLPQFMDRPGPYPYQSSSSSSRELSGSAAKVAIPRTTSASSQSQRRRSARACEPCRQRKIKCDGSKPVCRQCIDHNVSCFFVDVKRVRDQKQLGLLGKKVEQYERLLQELEKEVDENAARRIRKVLRGTDISSPTDDGGDSDSSISSIGSLEALDLVEEDLNRSEKTVATGFFGKNSEVAWMQKLEDEAKSRNRKKEDSTDMEDGVAGGHTMTPPQKQETAMAAMSYYLDDIGIPLMDSVDPYALPPKDLANRFFTAFMDSVHPSFNVVRKTAFVSQYRQFFSQPAQPPQRWLAILNMIFAIGCRYTQATSGRPDSGDYNDLVYLNRARKLTLSENVIFEHADLQQIQVEFLVALYFVSKCQINRAFKFSSMAFRSAVSLGINLRFVDDRTQYPAKEARIRLWWSIFLLEHLLTAITGRVSCVGESLSATPLPIPYEEEAFGRPDVLPLLQDSSLRMTRLKLTLLQSDEESRADVSWLPSCEPSPSLYFHCIVDLATITQAIINKVYSIQGLRERASQVEQRIRRFSFNLDMWLSKVPEAYRFTSGSGDQLDLPSDRNAPWMRERISLAMSYYSSRLTLCRPCLTHTGLAPGDPSPDPAVPPSARQGSRRISSSRMQFNTAMALTCVRSARSLLCCIPETPDITWLTTMTPWWCILHYIMQATTTILLHLSSWPTRLPNDPMHQVSADIEATSRETKKALRWLHHMAYKYPAARRAFRQCNSIVRRITPSLGIDISDIPSGKDLPTEDDAYHLRDIDNTPSSRAGSMEFERHH</sequence>
<protein>
    <recommendedName>
        <fullName evidence="4">Transcription regulator galc</fullName>
    </recommendedName>
</protein>
<comment type="function">
    <text evidence="3">Transcription factor that negatively regulates the biosynthesis of ochratoxin A (OTA), a mycotoxin composed of a chlorinated type I polyketide dihydroisocoumarin moiety linked to L-phenylalanine, and demonstrated to have nephrotoxic, immunotoxic, genotoxic, neurotoxic, and teratogenic properties (PubMed:36006213). Also regulates cellular redox homeostasis and sensitivity to H(2)O(2) (PubMed:36006213). Carbon sources such as sucrose, glucose and arabinose repress gal4, leading to up-regulation of OTA biosynthetic genes and altered cellular redox homeostasis (PubMed:36006213).</text>
</comment>
<comment type="subcellular location">
    <subcellularLocation>
        <location evidence="1">Nucleus</location>
    </subcellularLocation>
</comment>
<comment type="induction">
    <text evidence="3">Expression is down-regulated in the presence of ochratoxin A-inducing carbon sources such as sucrose, glucose and arabinose.</text>
</comment>
<comment type="disruption phenotype">
    <text evidence="3">Leads to increased production of ochratoxin A (OTA) in the presence of OTA-inducing carbon sources such as sucrose, glucose and arabinose (PubMed:36006213). Increases the amount of superoxide anion and H(2)O(2), as well as the sensitivity to H(2)O(2), in the presence of sucrose, glucose or arabinose (PubMed:36006213).</text>
</comment>
<reference key="1">
    <citation type="journal article" date="2007" name="Nat. Biotechnol.">
        <title>Genome sequencing and analysis of the versatile cell factory Aspergillus niger CBS 513.88.</title>
        <authorList>
            <person name="Pel H.J."/>
            <person name="de Winde J.H."/>
            <person name="Archer D.B."/>
            <person name="Dyer P.S."/>
            <person name="Hofmann G."/>
            <person name="Schaap P.J."/>
            <person name="Turner G."/>
            <person name="de Vries R.P."/>
            <person name="Albang R."/>
            <person name="Albermann K."/>
            <person name="Andersen M.R."/>
            <person name="Bendtsen J.D."/>
            <person name="Benen J.A.E."/>
            <person name="van den Berg M."/>
            <person name="Breestraat S."/>
            <person name="Caddick M.X."/>
            <person name="Contreras R."/>
            <person name="Cornell M."/>
            <person name="Coutinho P.M."/>
            <person name="Danchin E.G.J."/>
            <person name="Debets A.J.M."/>
            <person name="Dekker P."/>
            <person name="van Dijck P.W.M."/>
            <person name="van Dijk A."/>
            <person name="Dijkhuizen L."/>
            <person name="Driessen A.J.M."/>
            <person name="d'Enfert C."/>
            <person name="Geysens S."/>
            <person name="Goosen C."/>
            <person name="Groot G.S.P."/>
            <person name="de Groot P.W.J."/>
            <person name="Guillemette T."/>
            <person name="Henrissat B."/>
            <person name="Herweijer M."/>
            <person name="van den Hombergh J.P.T.W."/>
            <person name="van den Hondel C.A.M.J.J."/>
            <person name="van der Heijden R.T.J.M."/>
            <person name="van der Kaaij R.M."/>
            <person name="Klis F.M."/>
            <person name="Kools H.J."/>
            <person name="Kubicek C.P."/>
            <person name="van Kuyk P.A."/>
            <person name="Lauber J."/>
            <person name="Lu X."/>
            <person name="van der Maarel M.J.E.C."/>
            <person name="Meulenberg R."/>
            <person name="Menke H."/>
            <person name="Mortimer M.A."/>
            <person name="Nielsen J."/>
            <person name="Oliver S.G."/>
            <person name="Olsthoorn M."/>
            <person name="Pal K."/>
            <person name="van Peij N.N.M.E."/>
            <person name="Ram A.F.J."/>
            <person name="Rinas U."/>
            <person name="Roubos J.A."/>
            <person name="Sagt C.M.J."/>
            <person name="Schmoll M."/>
            <person name="Sun J."/>
            <person name="Ussery D."/>
            <person name="Varga J."/>
            <person name="Vervecken W."/>
            <person name="van de Vondervoort P.J.J."/>
            <person name="Wedler H."/>
            <person name="Woesten H.A.B."/>
            <person name="Zeng A.-P."/>
            <person name="van Ooyen A.J.J."/>
            <person name="Visser J."/>
            <person name="Stam H."/>
        </authorList>
    </citation>
    <scope>NUCLEOTIDE SEQUENCE [LARGE SCALE GENOMIC DNA]</scope>
    <source>
        <strain>ATCC MYA-4892 / CBS 513.88 / FGSC A1513</strain>
    </source>
</reference>
<reference key="2">
    <citation type="journal article" date="2022" name="Toxins">
        <title>Insights into the Underlying Mechanism of Ochratoxin A Production in Aspergillus niger CBS 513.88 Using Different Carbon Sources.</title>
        <authorList>
            <person name="Wei S."/>
            <person name="Hu C."/>
            <person name="Nie P."/>
            <person name="Zhai H."/>
            <person name="Zhang S."/>
            <person name="Li N."/>
            <person name="Lv Y."/>
            <person name="Hu Y."/>
        </authorList>
    </citation>
    <scope>INDUCTION</scope>
    <scope>FUNCTION</scope>
    <scope>DISRUPTION PHENOTYPE</scope>
</reference>
<dbReference type="EMBL" id="AM270260">
    <property type="protein sequence ID" value="CAK41014.1"/>
    <property type="molecule type" value="Genomic_DNA"/>
</dbReference>
<dbReference type="SMR" id="A2QYD4"/>
<dbReference type="EnsemblFungi" id="CAK41014">
    <property type="protein sequence ID" value="CAK41014"/>
    <property type="gene ID" value="An12g00840"/>
</dbReference>
<dbReference type="VEuPathDB" id="FungiDB:An12g00840"/>
<dbReference type="HOGENOM" id="CLU_011910_0_0_1"/>
<dbReference type="Proteomes" id="UP000006706">
    <property type="component" value="Chromosome 3L"/>
</dbReference>
<dbReference type="GO" id="GO:0005634">
    <property type="term" value="C:nucleus"/>
    <property type="evidence" value="ECO:0007669"/>
    <property type="project" value="UniProtKB-SubCell"/>
</dbReference>
<dbReference type="GO" id="GO:0003677">
    <property type="term" value="F:DNA binding"/>
    <property type="evidence" value="ECO:0007669"/>
    <property type="project" value="UniProtKB-KW"/>
</dbReference>
<dbReference type="GO" id="GO:0000981">
    <property type="term" value="F:DNA-binding transcription factor activity, RNA polymerase II-specific"/>
    <property type="evidence" value="ECO:0007669"/>
    <property type="project" value="InterPro"/>
</dbReference>
<dbReference type="GO" id="GO:0008270">
    <property type="term" value="F:zinc ion binding"/>
    <property type="evidence" value="ECO:0007669"/>
    <property type="project" value="InterPro"/>
</dbReference>
<dbReference type="GO" id="GO:0006351">
    <property type="term" value="P:DNA-templated transcription"/>
    <property type="evidence" value="ECO:0007669"/>
    <property type="project" value="InterPro"/>
</dbReference>
<dbReference type="GO" id="GO:0009893">
    <property type="term" value="P:positive regulation of metabolic process"/>
    <property type="evidence" value="ECO:0007669"/>
    <property type="project" value="UniProtKB-ARBA"/>
</dbReference>
<dbReference type="CDD" id="cd12148">
    <property type="entry name" value="fungal_TF_MHR"/>
    <property type="match status" value="1"/>
</dbReference>
<dbReference type="CDD" id="cd00067">
    <property type="entry name" value="GAL4"/>
    <property type="match status" value="1"/>
</dbReference>
<dbReference type="Gene3D" id="4.10.240.10">
    <property type="entry name" value="Zn(2)-C6 fungal-type DNA-binding domain"/>
    <property type="match status" value="1"/>
</dbReference>
<dbReference type="InterPro" id="IPR053230">
    <property type="entry name" value="Trans_reg_galc"/>
</dbReference>
<dbReference type="InterPro" id="IPR007219">
    <property type="entry name" value="Transcription_factor_dom_fun"/>
</dbReference>
<dbReference type="InterPro" id="IPR036864">
    <property type="entry name" value="Zn2-C6_fun-type_DNA-bd_sf"/>
</dbReference>
<dbReference type="InterPro" id="IPR001138">
    <property type="entry name" value="Zn2Cys6_DnaBD"/>
</dbReference>
<dbReference type="PANTHER" id="PTHR47654:SF4">
    <property type="entry name" value="ZN(II)2CYS6 TRANSCRIPTION FACTOR (EUROFUNG)"/>
    <property type="match status" value="1"/>
</dbReference>
<dbReference type="PANTHER" id="PTHR47654">
    <property type="entry name" value="ZN(II)2CYS6 TRANSCRIPTION FACTOR (EUROFUNG)-RELATED"/>
    <property type="match status" value="1"/>
</dbReference>
<dbReference type="Pfam" id="PF04082">
    <property type="entry name" value="Fungal_trans"/>
    <property type="match status" value="1"/>
</dbReference>
<dbReference type="Pfam" id="PF00172">
    <property type="entry name" value="Zn_clus"/>
    <property type="match status" value="1"/>
</dbReference>
<dbReference type="SMART" id="SM00906">
    <property type="entry name" value="Fungal_trans"/>
    <property type="match status" value="1"/>
</dbReference>
<dbReference type="SMART" id="SM00066">
    <property type="entry name" value="GAL4"/>
    <property type="match status" value="1"/>
</dbReference>
<dbReference type="SUPFAM" id="SSF57701">
    <property type="entry name" value="Zn2/Cys6 DNA-binding domain"/>
    <property type="match status" value="1"/>
</dbReference>
<dbReference type="PROSITE" id="PS00463">
    <property type="entry name" value="ZN2_CY6_FUNGAL_1"/>
    <property type="match status" value="1"/>
</dbReference>
<dbReference type="PROSITE" id="PS50048">
    <property type="entry name" value="ZN2_CY6_FUNGAL_2"/>
    <property type="match status" value="1"/>
</dbReference>
<evidence type="ECO:0000255" key="1">
    <source>
        <dbReference type="PROSITE-ProRule" id="PRU00227"/>
    </source>
</evidence>
<evidence type="ECO:0000256" key="2">
    <source>
        <dbReference type="SAM" id="MobiDB-lite"/>
    </source>
</evidence>
<evidence type="ECO:0000269" key="3">
    <source>
    </source>
</evidence>
<evidence type="ECO:0000303" key="4">
    <source>
    </source>
</evidence>
<organism>
    <name type="scientific">Aspergillus niger (strain ATCC MYA-4892 / CBS 513.88 / FGSC A1513)</name>
    <dbReference type="NCBI Taxonomy" id="425011"/>
    <lineage>
        <taxon>Eukaryota</taxon>
        <taxon>Fungi</taxon>
        <taxon>Dikarya</taxon>
        <taxon>Ascomycota</taxon>
        <taxon>Pezizomycotina</taxon>
        <taxon>Eurotiomycetes</taxon>
        <taxon>Eurotiomycetidae</taxon>
        <taxon>Eurotiales</taxon>
        <taxon>Aspergillaceae</taxon>
        <taxon>Aspergillus</taxon>
        <taxon>Aspergillus subgen. Circumdati</taxon>
    </lineage>
</organism>
<gene>
    <name evidence="4" type="primary">gal4</name>
    <name type="ORF">An12g00840</name>
</gene>
<feature type="chain" id="PRO_0000457630" description="Transcription regulator galc">
    <location>
        <begin position="1"/>
        <end position="825"/>
    </location>
</feature>
<feature type="DNA-binding region" description="Zn(2)-C6 fungal-type" evidence="1">
    <location>
        <begin position="104"/>
        <end position="131"/>
    </location>
</feature>
<feature type="region of interest" description="Disordered" evidence="2">
    <location>
        <begin position="60"/>
        <end position="102"/>
    </location>
</feature>
<feature type="region of interest" description="Disordered" evidence="2">
    <location>
        <begin position="239"/>
        <end position="267"/>
    </location>
</feature>
<feature type="region of interest" description="Disordered" evidence="2">
    <location>
        <begin position="642"/>
        <end position="663"/>
    </location>
</feature>
<feature type="region of interest" description="Disordered" evidence="2">
    <location>
        <begin position="804"/>
        <end position="825"/>
    </location>
</feature>
<feature type="compositionally biased region" description="Low complexity" evidence="2">
    <location>
        <begin position="68"/>
        <end position="79"/>
    </location>
</feature>
<feature type="compositionally biased region" description="Basic and acidic residues" evidence="2">
    <location>
        <begin position="239"/>
        <end position="251"/>
    </location>
</feature>
<proteinExistence type="evidence at transcript level"/>